<gene>
    <name evidence="1" type="primary">cemA</name>
</gene>
<name>CEMA_NICTO</name>
<geneLocation type="chloroplast"/>
<organism>
    <name type="scientific">Nicotiana tomentosiformis</name>
    <name type="common">Tobacco</name>
    <dbReference type="NCBI Taxonomy" id="4098"/>
    <lineage>
        <taxon>Eukaryota</taxon>
        <taxon>Viridiplantae</taxon>
        <taxon>Streptophyta</taxon>
        <taxon>Embryophyta</taxon>
        <taxon>Tracheophyta</taxon>
        <taxon>Spermatophyta</taxon>
        <taxon>Magnoliopsida</taxon>
        <taxon>eudicotyledons</taxon>
        <taxon>Gunneridae</taxon>
        <taxon>Pentapetalae</taxon>
        <taxon>asterids</taxon>
        <taxon>lamiids</taxon>
        <taxon>Solanales</taxon>
        <taxon>Solanaceae</taxon>
        <taxon>Nicotianoideae</taxon>
        <taxon>Nicotianeae</taxon>
        <taxon>Nicotiana</taxon>
    </lineage>
</organism>
<feature type="chain" id="PRO_0000275246" description="Potassium/proton antiporter CemA">
    <location>
        <begin position="1"/>
        <end position="229"/>
    </location>
</feature>
<feature type="transmembrane region" description="Helical" evidence="1">
    <location>
        <begin position="7"/>
        <end position="27"/>
    </location>
</feature>
<feature type="transmembrane region" description="Helical" evidence="1">
    <location>
        <begin position="107"/>
        <end position="127"/>
    </location>
</feature>
<feature type="transmembrane region" description="Helical" evidence="1">
    <location>
        <begin position="189"/>
        <end position="209"/>
    </location>
</feature>
<protein>
    <recommendedName>
        <fullName evidence="1">Potassium/proton antiporter CemA</fullName>
    </recommendedName>
    <alternativeName>
        <fullName evidence="1">Chloroplast envelope membrane protein A</fullName>
        <shortName evidence="1">CemA</shortName>
    </alternativeName>
</protein>
<keyword id="KW-0050">Antiport</keyword>
<keyword id="KW-0150">Chloroplast</keyword>
<keyword id="KW-0375">Hydrogen ion transport</keyword>
<keyword id="KW-0406">Ion transport</keyword>
<keyword id="KW-0472">Membrane</keyword>
<keyword id="KW-0934">Plastid</keyword>
<keyword id="KW-1001">Plastid inner membrane</keyword>
<keyword id="KW-0630">Potassium</keyword>
<keyword id="KW-0633">Potassium transport</keyword>
<keyword id="KW-0812">Transmembrane</keyword>
<keyword id="KW-1133">Transmembrane helix</keyword>
<keyword id="KW-0813">Transport</keyword>
<sequence length="229" mass="26745">MAKKKAFTPLFYLASIVFLPWWISFSVNKCLESWVTNWWNTGQSEIFLNNIQEKSLLEKFIELEELLFLDEMVKEYSETHLEEFGIGIHKETIQLIKIQNENRIHTILHFSTNIICFIILSGYSILGNENLAILNSWAQEFLYNLSDTVKAFSILLLTDLCIGFHSPHGWELMIGSIYKDFGFVHSDQIISGLVSTFPVILDTIFKYWIFRYLNRLSPSLVVIYHSMND</sequence>
<proteinExistence type="inferred from homology"/>
<comment type="function">
    <text evidence="1">Contributes to K(+)/H(+) antiport activity by supporting proton efflux to control proton extrusion and homeostasis in chloroplasts in a light-dependent manner to modulate photosynthesis. Prevents excessive induction of non-photochemical quenching (NPQ) under continuous-light conditions. Indirectly promotes efficient inorganic carbon uptake into chloroplasts.</text>
</comment>
<comment type="catalytic activity">
    <reaction evidence="1">
        <text>K(+)(in) + H(+)(out) = K(+)(out) + H(+)(in)</text>
        <dbReference type="Rhea" id="RHEA:29467"/>
        <dbReference type="ChEBI" id="CHEBI:15378"/>
        <dbReference type="ChEBI" id="CHEBI:29103"/>
    </reaction>
</comment>
<comment type="subcellular location">
    <subcellularLocation>
        <location evidence="1">Plastid</location>
        <location evidence="1">Chloroplast inner membrane</location>
        <topology evidence="1">Multi-pass membrane protein</topology>
    </subcellularLocation>
</comment>
<comment type="similarity">
    <text evidence="1 2">Belongs to the CemA family.</text>
</comment>
<reference key="1">
    <citation type="journal article" date="2006" name="Mol. Genet. Genomics">
        <title>The chloroplast genome of Nicotiana sylvestris and Nicotiana tomentosiformis: complete sequencing confirms that the Nicotiana sylvestris progenitor is the maternal genome donor of Nicotiana tabacum.</title>
        <authorList>
            <person name="Yukawa M."/>
            <person name="Tsudzuki T."/>
            <person name="Sugiura M."/>
        </authorList>
    </citation>
    <scope>NUCLEOTIDE SEQUENCE [LARGE SCALE GENOMIC DNA]</scope>
</reference>
<dbReference type="EMBL" id="AB240139">
    <property type="protein sequence ID" value="BAE48014.1"/>
    <property type="molecule type" value="Genomic_DNA"/>
</dbReference>
<dbReference type="RefSeq" id="YP_398876.1">
    <property type="nucleotide sequence ID" value="NC_007602.1"/>
</dbReference>
<dbReference type="GeneID" id="3776314"/>
<dbReference type="KEGG" id="nto:3776314"/>
<dbReference type="OrthoDB" id="993at2759"/>
<dbReference type="GO" id="GO:0009706">
    <property type="term" value="C:chloroplast inner membrane"/>
    <property type="evidence" value="ECO:0007669"/>
    <property type="project" value="UniProtKB-SubCell"/>
</dbReference>
<dbReference type="GO" id="GO:0015297">
    <property type="term" value="F:antiporter activity"/>
    <property type="evidence" value="ECO:0007669"/>
    <property type="project" value="UniProtKB-KW"/>
</dbReference>
<dbReference type="GO" id="GO:0015078">
    <property type="term" value="F:proton transmembrane transporter activity"/>
    <property type="evidence" value="ECO:0007669"/>
    <property type="project" value="UniProtKB-UniRule"/>
</dbReference>
<dbReference type="GO" id="GO:0006813">
    <property type="term" value="P:potassium ion transport"/>
    <property type="evidence" value="ECO:0007669"/>
    <property type="project" value="UniProtKB-UniRule"/>
</dbReference>
<dbReference type="HAMAP" id="MF_01308">
    <property type="entry name" value="CemA_PxcA"/>
    <property type="match status" value="1"/>
</dbReference>
<dbReference type="InterPro" id="IPR004282">
    <property type="entry name" value="CemA"/>
</dbReference>
<dbReference type="PANTHER" id="PTHR33650:SF2">
    <property type="entry name" value="CHLOROPLAST ENVELOPE MEMBRANE PROTEIN"/>
    <property type="match status" value="1"/>
</dbReference>
<dbReference type="PANTHER" id="PTHR33650">
    <property type="entry name" value="CHLOROPLAST ENVELOPE MEMBRANE PROTEIN-RELATED"/>
    <property type="match status" value="1"/>
</dbReference>
<dbReference type="Pfam" id="PF03040">
    <property type="entry name" value="CemA"/>
    <property type="match status" value="1"/>
</dbReference>
<evidence type="ECO:0000255" key="1">
    <source>
        <dbReference type="HAMAP-Rule" id="MF_01308"/>
    </source>
</evidence>
<evidence type="ECO:0000305" key="2"/>
<accession>Q33C21</accession>